<protein>
    <recommendedName>
        <fullName evidence="1">Cobyric acid synthase</fullName>
    </recommendedName>
</protein>
<name>COBQ_CLOK5</name>
<keyword id="KW-0169">Cobalamin biosynthesis</keyword>
<keyword id="KW-0315">Glutamine amidotransferase</keyword>
<keyword id="KW-1185">Reference proteome</keyword>
<reference key="1">
    <citation type="journal article" date="2008" name="Proc. Natl. Acad. Sci. U.S.A.">
        <title>The genome of Clostridium kluyveri, a strict anaerobe with unique metabolic features.</title>
        <authorList>
            <person name="Seedorf H."/>
            <person name="Fricke W.F."/>
            <person name="Veith B."/>
            <person name="Brueggemann H."/>
            <person name="Liesegang H."/>
            <person name="Strittmatter A."/>
            <person name="Miethke M."/>
            <person name="Buckel W."/>
            <person name="Hinderberger J."/>
            <person name="Li F."/>
            <person name="Hagemeier C."/>
            <person name="Thauer R.K."/>
            <person name="Gottschalk G."/>
        </authorList>
    </citation>
    <scope>NUCLEOTIDE SEQUENCE [LARGE SCALE GENOMIC DNA]</scope>
    <source>
        <strain>ATCC 8527 / DSM 555 / NBRC 12016 / NCIMB 10680 / K1</strain>
    </source>
</reference>
<proteinExistence type="inferred from homology"/>
<accession>A5N643</accession>
<gene>
    <name evidence="1" type="primary">cobQ</name>
    <name type="ordered locus">CKL_0721</name>
</gene>
<feature type="chain" id="PRO_0000332333" description="Cobyric acid synthase">
    <location>
        <begin position="1"/>
        <end position="499"/>
    </location>
</feature>
<feature type="domain" description="GATase cobBQ-type" evidence="1">
    <location>
        <begin position="246"/>
        <end position="441"/>
    </location>
</feature>
<feature type="active site" description="Nucleophile" evidence="1">
    <location>
        <position position="327"/>
    </location>
</feature>
<feature type="active site" evidence="1">
    <location>
        <position position="433"/>
    </location>
</feature>
<evidence type="ECO:0000255" key="1">
    <source>
        <dbReference type="HAMAP-Rule" id="MF_00028"/>
    </source>
</evidence>
<sequence length="499" mass="55646">MPKIMIQGTASSVGKSIIVAALCRIFKQDGFKVCPYKSQNMSLNSYITLDGREMGRAQVLQAYASGLEPEVYMNPILLKPTTDKNCQVIIRGEVYCNSSAREYYNMKKEFVPMLKKDFEILEDKFDIVVIEGAGSPAEINLRDNDIVNMGLAEMVDSPVILVGDIDKGGVFASLLGTIMLLTEKEKSRVKGTIINKFRGDVDILKPGLSMIEEKIKVPSIGVIPYFRLALEDEDSAVDFNTKISAPIDIAIIKLPHISNFTDMDPLKIEEDVSLRYVTSADDFGNPDLLIIPGSKNTIEDLLYIRKVGIEDKIKKYSSRDGFIFGICGGYQMLGTYIEDPLGVETKVKAVEGMNILDVSTVFAKEKITTRVKGKVCGLTENIDIYGYEIHMGSCNYGKKAKPLVEITDKNGCSCNFKEGAINPGRNVMGTYIHGIFDGAELRQYIMNTLRSRRGIKHKNSKVYENLRDGEIDKLADIVRSSLDMKKVYEILNVKSKFME</sequence>
<comment type="function">
    <text evidence="1">Catalyzes amidations at positions B, D, E, and G on adenosylcobyrinic A,C-diamide. NH(2) groups are provided by glutamine, and one molecule of ATP is hydrogenolyzed for each amidation.</text>
</comment>
<comment type="pathway">
    <text evidence="1">Cofactor biosynthesis; adenosylcobalamin biosynthesis.</text>
</comment>
<comment type="similarity">
    <text evidence="1">Belongs to the CobB/CobQ family. CobQ subfamily.</text>
</comment>
<organism>
    <name type="scientific">Clostridium kluyveri (strain ATCC 8527 / DSM 555 / NBRC 12016 / NCIMB 10680 / K1)</name>
    <dbReference type="NCBI Taxonomy" id="431943"/>
    <lineage>
        <taxon>Bacteria</taxon>
        <taxon>Bacillati</taxon>
        <taxon>Bacillota</taxon>
        <taxon>Clostridia</taxon>
        <taxon>Eubacteriales</taxon>
        <taxon>Clostridiaceae</taxon>
        <taxon>Clostridium</taxon>
    </lineage>
</organism>
<dbReference type="EMBL" id="CP000673">
    <property type="protein sequence ID" value="EDK32774.1"/>
    <property type="molecule type" value="Genomic_DNA"/>
</dbReference>
<dbReference type="RefSeq" id="WP_011989289.1">
    <property type="nucleotide sequence ID" value="NC_009706.1"/>
</dbReference>
<dbReference type="STRING" id="431943.CKL_0721"/>
<dbReference type="KEGG" id="ckl:CKL_0721"/>
<dbReference type="eggNOG" id="COG1492">
    <property type="taxonomic scope" value="Bacteria"/>
</dbReference>
<dbReference type="HOGENOM" id="CLU_019250_2_2_9"/>
<dbReference type="UniPathway" id="UPA00148"/>
<dbReference type="Proteomes" id="UP000002411">
    <property type="component" value="Chromosome"/>
</dbReference>
<dbReference type="GO" id="GO:0015420">
    <property type="term" value="F:ABC-type vitamin B12 transporter activity"/>
    <property type="evidence" value="ECO:0007669"/>
    <property type="project" value="UniProtKB-UniRule"/>
</dbReference>
<dbReference type="GO" id="GO:0003824">
    <property type="term" value="F:catalytic activity"/>
    <property type="evidence" value="ECO:0007669"/>
    <property type="project" value="InterPro"/>
</dbReference>
<dbReference type="GO" id="GO:0009236">
    <property type="term" value="P:cobalamin biosynthetic process"/>
    <property type="evidence" value="ECO:0007669"/>
    <property type="project" value="UniProtKB-UniRule"/>
</dbReference>
<dbReference type="CDD" id="cd05389">
    <property type="entry name" value="CobQ_N"/>
    <property type="match status" value="1"/>
</dbReference>
<dbReference type="CDD" id="cd01750">
    <property type="entry name" value="GATase1_CobQ"/>
    <property type="match status" value="1"/>
</dbReference>
<dbReference type="Gene3D" id="3.40.50.880">
    <property type="match status" value="1"/>
</dbReference>
<dbReference type="Gene3D" id="3.40.50.300">
    <property type="entry name" value="P-loop containing nucleotide triphosphate hydrolases"/>
    <property type="match status" value="1"/>
</dbReference>
<dbReference type="HAMAP" id="MF_00028">
    <property type="entry name" value="CobQ"/>
    <property type="match status" value="1"/>
</dbReference>
<dbReference type="InterPro" id="IPR029062">
    <property type="entry name" value="Class_I_gatase-like"/>
</dbReference>
<dbReference type="InterPro" id="IPR002586">
    <property type="entry name" value="CobQ/CobB/MinD/ParA_Nub-bd_dom"/>
</dbReference>
<dbReference type="InterPro" id="IPR033949">
    <property type="entry name" value="CobQ_GATase1"/>
</dbReference>
<dbReference type="InterPro" id="IPR047045">
    <property type="entry name" value="CobQ_N"/>
</dbReference>
<dbReference type="InterPro" id="IPR004459">
    <property type="entry name" value="CobQ_synth"/>
</dbReference>
<dbReference type="InterPro" id="IPR011698">
    <property type="entry name" value="GATase_3"/>
</dbReference>
<dbReference type="InterPro" id="IPR027417">
    <property type="entry name" value="P-loop_NTPase"/>
</dbReference>
<dbReference type="NCBIfam" id="TIGR00313">
    <property type="entry name" value="cobQ"/>
    <property type="match status" value="1"/>
</dbReference>
<dbReference type="NCBIfam" id="NF001989">
    <property type="entry name" value="PRK00784.1"/>
    <property type="match status" value="1"/>
</dbReference>
<dbReference type="PANTHER" id="PTHR21343:SF1">
    <property type="entry name" value="COBYRIC ACID SYNTHASE"/>
    <property type="match status" value="1"/>
</dbReference>
<dbReference type="PANTHER" id="PTHR21343">
    <property type="entry name" value="DETHIOBIOTIN SYNTHETASE"/>
    <property type="match status" value="1"/>
</dbReference>
<dbReference type="Pfam" id="PF01656">
    <property type="entry name" value="CbiA"/>
    <property type="match status" value="1"/>
</dbReference>
<dbReference type="Pfam" id="PF07685">
    <property type="entry name" value="GATase_3"/>
    <property type="match status" value="1"/>
</dbReference>
<dbReference type="SUPFAM" id="SSF52317">
    <property type="entry name" value="Class I glutamine amidotransferase-like"/>
    <property type="match status" value="1"/>
</dbReference>
<dbReference type="SUPFAM" id="SSF52540">
    <property type="entry name" value="P-loop containing nucleoside triphosphate hydrolases"/>
    <property type="match status" value="1"/>
</dbReference>
<dbReference type="PROSITE" id="PS51274">
    <property type="entry name" value="GATASE_COBBQ"/>
    <property type="match status" value="1"/>
</dbReference>